<feature type="chain" id="PRO_0000220792" description="Uncharacterized protein UU050">
    <location>
        <begin position="1"/>
        <end position="304"/>
    </location>
</feature>
<proteinExistence type="predicted"/>
<protein>
    <recommendedName>
        <fullName>Uncharacterized protein UU050</fullName>
    </recommendedName>
</protein>
<reference key="1">
    <citation type="journal article" date="2000" name="Nature">
        <title>The complete sequence of the mucosal pathogen Ureaplasma urealyticum.</title>
        <authorList>
            <person name="Glass J.I."/>
            <person name="Lefkowitz E.J."/>
            <person name="Glass J.S."/>
            <person name="Heiner C.R."/>
            <person name="Chen E.Y."/>
            <person name="Cassell G.H."/>
        </authorList>
    </citation>
    <scope>NUCLEOTIDE SEQUENCE [LARGE SCALE GENOMIC DNA]</scope>
    <source>
        <strain>ATCC 700970</strain>
    </source>
</reference>
<name>Y050_UREPA</name>
<gene>
    <name type="ordered locus">UU050</name>
</gene>
<accession>Q9PR95</accession>
<keyword id="KW-1185">Reference proteome</keyword>
<organism>
    <name type="scientific">Ureaplasma parvum serovar 3 (strain ATCC 700970)</name>
    <dbReference type="NCBI Taxonomy" id="273119"/>
    <lineage>
        <taxon>Bacteria</taxon>
        <taxon>Bacillati</taxon>
        <taxon>Mycoplasmatota</taxon>
        <taxon>Mycoplasmoidales</taxon>
        <taxon>Mycoplasmoidaceae</taxon>
        <taxon>Ureaplasma</taxon>
    </lineage>
</organism>
<dbReference type="EMBL" id="AF222894">
    <property type="protein sequence ID" value="AAF30455.1"/>
    <property type="molecule type" value="Genomic_DNA"/>
</dbReference>
<dbReference type="RefSeq" id="WP_006688472.1">
    <property type="nucleotide sequence ID" value="NC_002162.1"/>
</dbReference>
<dbReference type="SMR" id="Q9PR95"/>
<dbReference type="STRING" id="273119.UU050"/>
<dbReference type="EnsemblBacteria" id="AAF30455">
    <property type="protein sequence ID" value="AAF30455"/>
    <property type="gene ID" value="UU050"/>
</dbReference>
<dbReference type="GeneID" id="29672129"/>
<dbReference type="KEGG" id="uur:UU050"/>
<dbReference type="eggNOG" id="ENOG5033TK5">
    <property type="taxonomic scope" value="Bacteria"/>
</dbReference>
<dbReference type="HOGENOM" id="CLU_079868_0_0_14"/>
<dbReference type="OrthoDB" id="400602at2"/>
<dbReference type="Proteomes" id="UP000000423">
    <property type="component" value="Chromosome"/>
</dbReference>
<dbReference type="NCBIfam" id="NF045933">
    <property type="entry name" value="MSC_0622_gamma"/>
    <property type="match status" value="1"/>
</dbReference>
<sequence length="304" mass="36054">MQLKDLINKKKNLNNINLKVSNERNIFLINIMKLNQRLTFFSKNAFEIKESILSLKRIYNIKHDMLRHEERKIFKFLNKINDRVLWIYLTEEQKYSTDSYSRYEQKILKTIKSNRDDFILIGQGAIEFGKNHNLNVLQTFNDSNIKNLTTQLTKMIMILYTFDNYKKVNFVINSNKNYDGHFTILPMNEFSFDKFINLQKCDSNIIDFQKVKIYPNLNEFINVQINVFLVNIINTLITESSFYKTKNGLVATNNILKELDDNLSKIQRKITRVKTELQIEEINLLARQNMNEDDNDNDGGVYES</sequence>